<gene>
    <name evidence="17" type="primary">Kat2a</name>
    <name evidence="13" type="synonym">Gcn5l2</name>
</gene>
<feature type="initiator methionine" description="Removed" evidence="1">
    <location>
        <position position="1"/>
    </location>
</feature>
<feature type="chain" id="PRO_0000211203" description="Histone acetyltransferase KAT2A">
    <location>
        <begin position="2"/>
        <end position="830"/>
    </location>
</feature>
<feature type="domain" description="N-acetyltransferase" evidence="3">
    <location>
        <begin position="496"/>
        <end position="649"/>
    </location>
</feature>
<feature type="domain" description="Bromo" evidence="2">
    <location>
        <begin position="721"/>
        <end position="825"/>
    </location>
</feature>
<feature type="region of interest" description="Disordered" evidence="4">
    <location>
        <begin position="1"/>
        <end position="94"/>
    </location>
</feature>
<feature type="region of interest" description="Disordered" evidence="4">
    <location>
        <begin position="398"/>
        <end position="426"/>
    </location>
</feature>
<feature type="compositionally biased region" description="Pro residues" evidence="4">
    <location>
        <begin position="7"/>
        <end position="33"/>
    </location>
</feature>
<feature type="compositionally biased region" description="Pro residues" evidence="4">
    <location>
        <begin position="41"/>
        <end position="51"/>
    </location>
</feature>
<feature type="compositionally biased region" description="Gly residues" evidence="4">
    <location>
        <begin position="58"/>
        <end position="69"/>
    </location>
</feature>
<feature type="compositionally biased region" description="Basic residues" evidence="4">
    <location>
        <begin position="83"/>
        <end position="94"/>
    </location>
</feature>
<feature type="compositionally biased region" description="Low complexity" evidence="4">
    <location>
        <begin position="398"/>
        <end position="417"/>
    </location>
</feature>
<feature type="active site" description="Proton donor/acceptor" evidence="1">
    <location>
        <position position="568"/>
    </location>
</feature>
<feature type="binding site" evidence="1">
    <location>
        <begin position="572"/>
        <end position="574"/>
    </location>
    <ligand>
        <name>acetyl-CoA</name>
        <dbReference type="ChEBI" id="CHEBI:57288"/>
    </ligand>
</feature>
<feature type="binding site" evidence="1">
    <location>
        <begin position="572"/>
        <end position="574"/>
    </location>
    <ligand>
        <name>succinyl-CoA</name>
        <dbReference type="ChEBI" id="CHEBI:57292"/>
    </ligand>
</feature>
<feature type="binding site" evidence="1">
    <location>
        <begin position="579"/>
        <end position="585"/>
    </location>
    <ligand>
        <name>acetyl-CoA</name>
        <dbReference type="ChEBI" id="CHEBI:57288"/>
    </ligand>
</feature>
<feature type="binding site" evidence="1">
    <location>
        <begin position="579"/>
        <end position="585"/>
    </location>
    <ligand>
        <name>succinyl-CoA</name>
        <dbReference type="ChEBI" id="CHEBI:57292"/>
    </ligand>
</feature>
<feature type="binding site" evidence="1">
    <location>
        <position position="610"/>
    </location>
    <ligand>
        <name>acetyl-CoA</name>
        <dbReference type="ChEBI" id="CHEBI:57288"/>
    </ligand>
</feature>
<feature type="binding site" evidence="1">
    <location>
        <position position="610"/>
    </location>
    <ligand>
        <name>succinyl-CoA</name>
        <dbReference type="ChEBI" id="CHEBI:57292"/>
    </ligand>
</feature>
<feature type="modified residue" description="N-acetylalanine" evidence="1">
    <location>
        <position position="2"/>
    </location>
</feature>
<feature type="modified residue" description="Phosphoserine" evidence="1">
    <location>
        <position position="302"/>
    </location>
</feature>
<feature type="modified residue" description="N6-acetyllysine" evidence="1">
    <location>
        <position position="542"/>
    </location>
</feature>
<feature type="modified residue" description="Phosphothreonine" evidence="1">
    <location>
        <position position="728"/>
    </location>
</feature>
<feature type="cross-link" description="Glycyl lysine isopeptide (Lys-Gly) (interchain with G-Cter in SUMO2)" evidence="1">
    <location>
        <position position="721"/>
    </location>
</feature>
<feature type="cross-link" description="Glycyl lysine isopeptide (Lys-Gly) (interchain with G-Cter in SUMO2)" evidence="1">
    <location>
        <position position="752"/>
    </location>
</feature>
<feature type="cross-link" description="Glycyl lysine isopeptide (Lys-Gly) (interchain with G-Cter in SUMO2)" evidence="1">
    <location>
        <position position="784"/>
    </location>
</feature>
<feature type="sequence conflict" description="In Ref. 1; AAF70497." evidence="15" ref="1">
    <original>D</original>
    <variation>N</variation>
    <location>
        <position position="804"/>
    </location>
</feature>
<feature type="sequence conflict" description="In Ref. 1; AAF70497." evidence="15" ref="1">
    <original>E</original>
    <variation>K</variation>
    <location>
        <position position="815"/>
    </location>
</feature>
<feature type="helix" evidence="18">
    <location>
        <begin position="84"/>
        <end position="90"/>
    </location>
</feature>
<feature type="helix" evidence="18">
    <location>
        <begin position="94"/>
        <end position="102"/>
    </location>
</feature>
<feature type="strand" evidence="18">
    <location>
        <begin position="109"/>
        <end position="112"/>
    </location>
</feature>
<feature type="turn" evidence="18">
    <location>
        <begin position="143"/>
        <end position="145"/>
    </location>
</feature>
<feature type="helix" evidence="18">
    <location>
        <begin position="150"/>
        <end position="153"/>
    </location>
</feature>
<feature type="helix" evidence="18">
    <location>
        <begin position="154"/>
        <end position="156"/>
    </location>
</feature>
<feature type="helix" evidence="18">
    <location>
        <begin position="161"/>
        <end position="183"/>
    </location>
</feature>
<feature type="helix" evidence="18">
    <location>
        <begin position="187"/>
        <end position="206"/>
    </location>
</feature>
<feature type="strand" evidence="18">
    <location>
        <begin position="222"/>
        <end position="225"/>
    </location>
</feature>
<feature type="helix" evidence="18">
    <location>
        <begin position="226"/>
        <end position="238"/>
    </location>
</feature>
<feature type="helix" evidence="18">
    <location>
        <begin position="243"/>
        <end position="262"/>
    </location>
</feature>
<feature type="helix" evidence="18">
    <location>
        <begin position="268"/>
        <end position="274"/>
    </location>
</feature>
<feature type="helix" evidence="18">
    <location>
        <begin position="277"/>
        <end position="293"/>
    </location>
</feature>
<feature type="helix" evidence="18">
    <location>
        <begin position="295"/>
        <end position="299"/>
    </location>
</feature>
<feature type="helix" evidence="18">
    <location>
        <begin position="308"/>
        <end position="311"/>
    </location>
</feature>
<feature type="helix" evidence="18">
    <location>
        <begin position="314"/>
        <end position="335"/>
    </location>
</feature>
<feature type="helix" evidence="18">
    <location>
        <begin position="336"/>
        <end position="338"/>
    </location>
</feature>
<feature type="helix" evidence="18">
    <location>
        <begin position="341"/>
        <end position="363"/>
    </location>
</feature>
<feature type="helix" evidence="18">
    <location>
        <begin position="368"/>
        <end position="370"/>
    </location>
</feature>
<organism>
    <name type="scientific">Mus musculus</name>
    <name type="common">Mouse</name>
    <dbReference type="NCBI Taxonomy" id="10090"/>
    <lineage>
        <taxon>Eukaryota</taxon>
        <taxon>Metazoa</taxon>
        <taxon>Chordata</taxon>
        <taxon>Craniata</taxon>
        <taxon>Vertebrata</taxon>
        <taxon>Euteleostomi</taxon>
        <taxon>Mammalia</taxon>
        <taxon>Eutheria</taxon>
        <taxon>Euarchontoglires</taxon>
        <taxon>Glires</taxon>
        <taxon>Rodentia</taxon>
        <taxon>Myomorpha</taxon>
        <taxon>Muroidea</taxon>
        <taxon>Muridae</taxon>
        <taxon>Murinae</taxon>
        <taxon>Mus</taxon>
        <taxon>Mus</taxon>
    </lineage>
</organism>
<protein>
    <recommendedName>
        <fullName evidence="15">Histone acetyltransferase KAT2A</fullName>
        <ecNumber evidence="16">2.3.1.48</ecNumber>
    </recommendedName>
    <alternativeName>
        <fullName evidence="13">General control of amino acid synthesis protein 5-like 2</fullName>
    </alternativeName>
    <alternativeName>
        <fullName evidence="14">Histone acetyltransferase GCN5</fullName>
        <shortName evidence="14">MmGCN5</shortName>
    </alternativeName>
    <alternativeName>
        <fullName evidence="15">Histone glutaryltransferase KAT2A</fullName>
        <ecNumber evidence="1">2.3.1.-</ecNumber>
    </alternativeName>
    <alternativeName>
        <fullName evidence="1">Histone succinyltransferase KAT2A</fullName>
        <ecNumber evidence="1">2.3.1.-</ecNumber>
    </alternativeName>
    <alternativeName>
        <fullName evidence="15">Lysine acetyltransferase 2A</fullName>
    </alternativeName>
</protein>
<dbReference type="EC" id="2.3.1.48" evidence="16"/>
<dbReference type="EC" id="2.3.1.-" evidence="1"/>
<dbReference type="EMBL" id="AF254441">
    <property type="protein sequence ID" value="AAF70497.1"/>
    <property type="molecule type" value="mRNA"/>
</dbReference>
<dbReference type="EMBL" id="AK158079">
    <property type="protein sequence ID" value="BAE34351.1"/>
    <property type="molecule type" value="mRNA"/>
</dbReference>
<dbReference type="EMBL" id="AL591469">
    <property type="status" value="NOT_ANNOTATED_CDS"/>
    <property type="molecule type" value="Genomic_DNA"/>
</dbReference>
<dbReference type="EMBL" id="CH466662">
    <property type="protein sequence ID" value="EDL02541.1"/>
    <property type="molecule type" value="Genomic_DNA"/>
</dbReference>
<dbReference type="CCDS" id="CCDS25433.1"/>
<dbReference type="RefSeq" id="NP_064388.2">
    <property type="nucleotide sequence ID" value="NM_020004.5"/>
</dbReference>
<dbReference type="PDB" id="7BY1">
    <property type="method" value="X-ray"/>
    <property type="resolution" value="1.80 A"/>
    <property type="chains" value="A/B=67-378"/>
</dbReference>
<dbReference type="PDBsum" id="7BY1"/>
<dbReference type="SMR" id="Q9JHD2"/>
<dbReference type="BioGRID" id="199867">
    <property type="interactions" value="15"/>
</dbReference>
<dbReference type="ComplexPortal" id="CPX-1025">
    <property type="entry name" value="GCN5-containing ATAC complex"/>
</dbReference>
<dbReference type="ComplexPortal" id="CPX-916">
    <property type="entry name" value="TFTC histone acetylation complex"/>
</dbReference>
<dbReference type="ComplexPortal" id="CPX-920">
    <property type="entry name" value="SAGA complex, KAT2A variant"/>
</dbReference>
<dbReference type="DIP" id="DIP-29180N"/>
<dbReference type="FunCoup" id="Q9JHD2">
    <property type="interactions" value="1285"/>
</dbReference>
<dbReference type="IntAct" id="Q9JHD2">
    <property type="interactions" value="58"/>
</dbReference>
<dbReference type="MINT" id="Q9JHD2"/>
<dbReference type="STRING" id="10090.ENSMUSP00000099407"/>
<dbReference type="GlyGen" id="Q9JHD2">
    <property type="glycosylation" value="4 sites"/>
</dbReference>
<dbReference type="iPTMnet" id="Q9JHD2"/>
<dbReference type="PhosphoSitePlus" id="Q9JHD2"/>
<dbReference type="jPOST" id="Q9JHD2"/>
<dbReference type="PaxDb" id="10090-ENSMUSP00000099407"/>
<dbReference type="ProteomicsDB" id="301732"/>
<dbReference type="Pumba" id="Q9JHD2"/>
<dbReference type="Antibodypedia" id="29117">
    <property type="antibodies" value="360 antibodies from 35 providers"/>
</dbReference>
<dbReference type="DNASU" id="14534"/>
<dbReference type="Ensembl" id="ENSMUST00000103118.4">
    <property type="protein sequence ID" value="ENSMUSP00000099407.4"/>
    <property type="gene ID" value="ENSMUSG00000020918.15"/>
</dbReference>
<dbReference type="GeneID" id="14534"/>
<dbReference type="KEGG" id="mmu:14534"/>
<dbReference type="UCSC" id="uc007lma.2">
    <property type="organism name" value="mouse"/>
</dbReference>
<dbReference type="AGR" id="MGI:1343101"/>
<dbReference type="CTD" id="2648"/>
<dbReference type="MGI" id="MGI:1343101">
    <property type="gene designation" value="Kat2a"/>
</dbReference>
<dbReference type="VEuPathDB" id="HostDB:ENSMUSG00000020918"/>
<dbReference type="eggNOG" id="KOG1472">
    <property type="taxonomic scope" value="Eukaryota"/>
</dbReference>
<dbReference type="GeneTree" id="ENSGT00940000158799"/>
<dbReference type="InParanoid" id="Q9JHD2"/>
<dbReference type="OMA" id="AKYYVHE"/>
<dbReference type="OrthoDB" id="28190at9989"/>
<dbReference type="PhylomeDB" id="Q9JHD2"/>
<dbReference type="TreeFam" id="TF105399"/>
<dbReference type="BRENDA" id="2.3.1.48">
    <property type="organism ID" value="3474"/>
</dbReference>
<dbReference type="Reactome" id="R-MMU-2122947">
    <property type="pathway name" value="NOTCH1 Intracellular Domain Regulates Transcription"/>
</dbReference>
<dbReference type="Reactome" id="R-MMU-350054">
    <property type="pathway name" value="Notch-HLH transcription pathway"/>
</dbReference>
<dbReference type="Reactome" id="R-MMU-5250924">
    <property type="pathway name" value="B-WICH complex positively regulates rRNA expression"/>
</dbReference>
<dbReference type="Reactome" id="R-MMU-5689880">
    <property type="pathway name" value="Ub-specific processing proteases"/>
</dbReference>
<dbReference type="Reactome" id="R-MMU-8941856">
    <property type="pathway name" value="RUNX3 regulates NOTCH signaling"/>
</dbReference>
<dbReference type="Reactome" id="R-MMU-9772755">
    <property type="pathway name" value="Formation of WDR5-containing histone-modifying complexes"/>
</dbReference>
<dbReference type="BioGRID-ORCS" id="14534">
    <property type="hits" value="3 hits in 85 CRISPR screens"/>
</dbReference>
<dbReference type="ChiTaRS" id="Kat2a">
    <property type="organism name" value="mouse"/>
</dbReference>
<dbReference type="PRO" id="PR:Q9JHD2"/>
<dbReference type="Proteomes" id="UP000000589">
    <property type="component" value="Chromosome 11"/>
</dbReference>
<dbReference type="RNAct" id="Q9JHD2">
    <property type="molecule type" value="protein"/>
</dbReference>
<dbReference type="Bgee" id="ENSMUSG00000020918">
    <property type="expression patterns" value="Expressed in internal carotid artery and 262 other cell types or tissues"/>
</dbReference>
<dbReference type="ExpressionAtlas" id="Q9JHD2">
    <property type="expression patterns" value="baseline and differential"/>
</dbReference>
<dbReference type="GO" id="GO:0140672">
    <property type="term" value="C:ATAC complex"/>
    <property type="evidence" value="ECO:0000314"/>
    <property type="project" value="MGI"/>
</dbReference>
<dbReference type="GO" id="GO:0005813">
    <property type="term" value="C:centrosome"/>
    <property type="evidence" value="ECO:0000250"/>
    <property type="project" value="UniProtKB"/>
</dbReference>
<dbReference type="GO" id="GO:0000123">
    <property type="term" value="C:histone acetyltransferase complex"/>
    <property type="evidence" value="ECO:0000314"/>
    <property type="project" value="MGI"/>
</dbReference>
<dbReference type="GO" id="GO:0072686">
    <property type="term" value="C:mitotic spindle"/>
    <property type="evidence" value="ECO:0000314"/>
    <property type="project" value="MGI"/>
</dbReference>
<dbReference type="GO" id="GO:0005654">
    <property type="term" value="C:nucleoplasm"/>
    <property type="evidence" value="ECO:0000304"/>
    <property type="project" value="Reactome"/>
</dbReference>
<dbReference type="GO" id="GO:0005634">
    <property type="term" value="C:nucleus"/>
    <property type="evidence" value="ECO:0000314"/>
    <property type="project" value="MGI"/>
</dbReference>
<dbReference type="GO" id="GO:0045252">
    <property type="term" value="C:oxoglutarate dehydrogenase complex"/>
    <property type="evidence" value="ECO:0007669"/>
    <property type="project" value="Ensembl"/>
</dbReference>
<dbReference type="GO" id="GO:0000124">
    <property type="term" value="C:SAGA complex"/>
    <property type="evidence" value="ECO:0000314"/>
    <property type="project" value="MGI"/>
</dbReference>
<dbReference type="GO" id="GO:0033276">
    <property type="term" value="C:transcription factor TFTC complex"/>
    <property type="evidence" value="ECO:0000303"/>
    <property type="project" value="ComplexPortal"/>
</dbReference>
<dbReference type="GO" id="GO:0016407">
    <property type="term" value="F:acetyltransferase activity"/>
    <property type="evidence" value="ECO:0000314"/>
    <property type="project" value="UniProtKB"/>
</dbReference>
<dbReference type="GO" id="GO:0003682">
    <property type="term" value="F:chromatin binding"/>
    <property type="evidence" value="ECO:0000314"/>
    <property type="project" value="MGI"/>
</dbReference>
<dbReference type="GO" id="GO:0140297">
    <property type="term" value="F:DNA-binding transcription factor binding"/>
    <property type="evidence" value="ECO:0000353"/>
    <property type="project" value="UniProtKB"/>
</dbReference>
<dbReference type="GO" id="GO:0004402">
    <property type="term" value="F:histone acetyltransferase activity"/>
    <property type="evidence" value="ECO:0000314"/>
    <property type="project" value="MGI"/>
</dbReference>
<dbReference type="GO" id="GO:0042826">
    <property type="term" value="F:histone deacetylase binding"/>
    <property type="evidence" value="ECO:0007669"/>
    <property type="project" value="Ensembl"/>
</dbReference>
<dbReference type="GO" id="GO:0106229">
    <property type="term" value="F:histone glutaryltransferase activity"/>
    <property type="evidence" value="ECO:0000250"/>
    <property type="project" value="UniProtKB"/>
</dbReference>
<dbReference type="GO" id="GO:0010484">
    <property type="term" value="F:histone H3 acetyltransferase activity"/>
    <property type="evidence" value="ECO:0000314"/>
    <property type="project" value="MGI"/>
</dbReference>
<dbReference type="GO" id="GO:0043993">
    <property type="term" value="F:histone H3K18 acetyltransferase activity"/>
    <property type="evidence" value="ECO:0000314"/>
    <property type="project" value="MGI"/>
</dbReference>
<dbReference type="GO" id="GO:0043992">
    <property type="term" value="F:histone H3K9 acetyltransferase activity"/>
    <property type="evidence" value="ECO:0000314"/>
    <property type="project" value="UniProtKB"/>
</dbReference>
<dbReference type="GO" id="GO:0043997">
    <property type="term" value="F:histone H4K12 acetyltransferase activity"/>
    <property type="evidence" value="ECO:0000314"/>
    <property type="project" value="MGI"/>
</dbReference>
<dbReference type="GO" id="GO:0106078">
    <property type="term" value="F:histone succinyltransferase activity"/>
    <property type="evidence" value="ECO:0000250"/>
    <property type="project" value="UniProtKB"/>
</dbReference>
<dbReference type="GO" id="GO:0008080">
    <property type="term" value="F:N-acetyltransferase activity"/>
    <property type="evidence" value="ECO:0000314"/>
    <property type="project" value="MGI"/>
</dbReference>
<dbReference type="GO" id="GO:0019903">
    <property type="term" value="F:protein phosphatase binding"/>
    <property type="evidence" value="ECO:0007669"/>
    <property type="project" value="Ensembl"/>
</dbReference>
<dbReference type="GO" id="GO:0003713">
    <property type="term" value="F:transcription coactivator activity"/>
    <property type="evidence" value="ECO:0000250"/>
    <property type="project" value="UniProtKB"/>
</dbReference>
<dbReference type="GO" id="GO:1990090">
    <property type="term" value="P:cellular response to nerve growth factor stimulus"/>
    <property type="evidence" value="ECO:0007669"/>
    <property type="project" value="Ensembl"/>
</dbReference>
<dbReference type="GO" id="GO:0071356">
    <property type="term" value="P:cellular response to tumor necrosis factor"/>
    <property type="evidence" value="ECO:0007669"/>
    <property type="project" value="Ensembl"/>
</dbReference>
<dbReference type="GO" id="GO:0048144">
    <property type="term" value="P:fibroblast proliferation"/>
    <property type="evidence" value="ECO:0000315"/>
    <property type="project" value="MGI"/>
</dbReference>
<dbReference type="GO" id="GO:0006094">
    <property type="term" value="P:gluconeogenesis"/>
    <property type="evidence" value="ECO:0000316"/>
    <property type="project" value="MGI"/>
</dbReference>
<dbReference type="GO" id="GO:0007507">
    <property type="term" value="P:heart development"/>
    <property type="evidence" value="ECO:0000250"/>
    <property type="project" value="UniProtKB"/>
</dbReference>
<dbReference type="GO" id="GO:0001701">
    <property type="term" value="P:in utero embryonic development"/>
    <property type="evidence" value="ECO:0000315"/>
    <property type="project" value="MGI"/>
</dbReference>
<dbReference type="GO" id="GO:0048312">
    <property type="term" value="P:intracellular distribution of mitochondria"/>
    <property type="evidence" value="ECO:0007669"/>
    <property type="project" value="Ensembl"/>
</dbReference>
<dbReference type="GO" id="GO:0060173">
    <property type="term" value="P:limb development"/>
    <property type="evidence" value="ECO:0000250"/>
    <property type="project" value="UniProtKB"/>
</dbReference>
<dbReference type="GO" id="GO:0007616">
    <property type="term" value="P:long-term memory"/>
    <property type="evidence" value="ECO:0000315"/>
    <property type="project" value="UniProtKB"/>
</dbReference>
<dbReference type="GO" id="GO:0022037">
    <property type="term" value="P:metencephalon development"/>
    <property type="evidence" value="ECO:0000315"/>
    <property type="project" value="MGI"/>
</dbReference>
<dbReference type="GO" id="GO:0030901">
    <property type="term" value="P:midbrain development"/>
    <property type="evidence" value="ECO:0000315"/>
    <property type="project" value="MGI"/>
</dbReference>
<dbReference type="GO" id="GO:0035264">
    <property type="term" value="P:multicellular organism growth"/>
    <property type="evidence" value="ECO:0000315"/>
    <property type="project" value="MGI"/>
</dbReference>
<dbReference type="GO" id="GO:0046600">
    <property type="term" value="P:negative regulation of centriole replication"/>
    <property type="evidence" value="ECO:0007669"/>
    <property type="project" value="Ensembl"/>
</dbReference>
<dbReference type="GO" id="GO:0045721">
    <property type="term" value="P:negative regulation of gluconeogenesis"/>
    <property type="evidence" value="ECO:0007669"/>
    <property type="project" value="Ensembl"/>
</dbReference>
<dbReference type="GO" id="GO:0000122">
    <property type="term" value="P:negative regulation of transcription by RNA polymerase II"/>
    <property type="evidence" value="ECO:0007669"/>
    <property type="project" value="Ensembl"/>
</dbReference>
<dbReference type="GO" id="GO:0007399">
    <property type="term" value="P:nervous system development"/>
    <property type="evidence" value="ECO:0000315"/>
    <property type="project" value="MGI"/>
</dbReference>
<dbReference type="GO" id="GO:0001843">
    <property type="term" value="P:neural tube closure"/>
    <property type="evidence" value="ECO:0000315"/>
    <property type="project" value="MGI"/>
</dbReference>
<dbReference type="GO" id="GO:0106227">
    <property type="term" value="P:peptidyl-lysine glutarylation"/>
    <property type="evidence" value="ECO:0000250"/>
    <property type="project" value="UniProtKB"/>
</dbReference>
<dbReference type="GO" id="GO:2000727">
    <property type="term" value="P:positive regulation of cardiac muscle cell differentiation"/>
    <property type="evidence" value="ECO:0007669"/>
    <property type="project" value="Ensembl"/>
</dbReference>
<dbReference type="GO" id="GO:0031346">
    <property type="term" value="P:positive regulation of cell projection organization"/>
    <property type="evidence" value="ECO:0007669"/>
    <property type="project" value="Ensembl"/>
</dbReference>
<dbReference type="GO" id="GO:0001819">
    <property type="term" value="P:positive regulation of cytokine production"/>
    <property type="evidence" value="ECO:0000315"/>
    <property type="project" value="UniProtKB"/>
</dbReference>
<dbReference type="GO" id="GO:0045893">
    <property type="term" value="P:positive regulation of DNA-templated transcription"/>
    <property type="evidence" value="ECO:0000250"/>
    <property type="project" value="UniProtKB"/>
</dbReference>
<dbReference type="GO" id="GO:0045722">
    <property type="term" value="P:positive regulation of gluconeogenesis"/>
    <property type="evidence" value="ECO:0000316"/>
    <property type="project" value="MGI"/>
</dbReference>
<dbReference type="GO" id="GO:0045944">
    <property type="term" value="P:positive regulation of transcription by RNA polymerase II"/>
    <property type="evidence" value="ECO:0000315"/>
    <property type="project" value="UniProtKB"/>
</dbReference>
<dbReference type="GO" id="GO:1903010">
    <property type="term" value="P:regulation of bone development"/>
    <property type="evidence" value="ECO:0000315"/>
    <property type="project" value="UniProtKB"/>
</dbReference>
<dbReference type="GO" id="GO:0061035">
    <property type="term" value="P:regulation of cartilage development"/>
    <property type="evidence" value="ECO:0000315"/>
    <property type="project" value="UniProtKB"/>
</dbReference>
<dbReference type="GO" id="GO:0051726">
    <property type="term" value="P:regulation of cell cycle"/>
    <property type="evidence" value="ECO:0000315"/>
    <property type="project" value="ComplexPortal"/>
</dbReference>
<dbReference type="GO" id="GO:0051302">
    <property type="term" value="P:regulation of cell division"/>
    <property type="evidence" value="ECO:0000314"/>
    <property type="project" value="ComplexPortal"/>
</dbReference>
<dbReference type="GO" id="GO:0006282">
    <property type="term" value="P:regulation of DNA repair"/>
    <property type="evidence" value="ECO:0000303"/>
    <property type="project" value="ComplexPortal"/>
</dbReference>
<dbReference type="GO" id="GO:0006355">
    <property type="term" value="P:regulation of DNA-templated transcription"/>
    <property type="evidence" value="ECO:0000266"/>
    <property type="project" value="ComplexPortal"/>
</dbReference>
<dbReference type="GO" id="GO:0045995">
    <property type="term" value="P:regulation of embryonic development"/>
    <property type="evidence" value="ECO:0000314"/>
    <property type="project" value="ComplexPortal"/>
</dbReference>
<dbReference type="GO" id="GO:0031647">
    <property type="term" value="P:regulation of protein stability"/>
    <property type="evidence" value="ECO:0000266"/>
    <property type="project" value="MGI"/>
</dbReference>
<dbReference type="GO" id="GO:0045589">
    <property type="term" value="P:regulation of regulatory T cell differentiation"/>
    <property type="evidence" value="ECO:0000315"/>
    <property type="project" value="UniProtKB"/>
</dbReference>
<dbReference type="GO" id="GO:0043484">
    <property type="term" value="P:regulation of RNA splicing"/>
    <property type="evidence" value="ECO:0000303"/>
    <property type="project" value="ComplexPortal"/>
</dbReference>
<dbReference type="GO" id="GO:2000036">
    <property type="term" value="P:regulation of stem cell population maintenance"/>
    <property type="evidence" value="ECO:0000315"/>
    <property type="project" value="UniProtKB"/>
</dbReference>
<dbReference type="GO" id="GO:0048167">
    <property type="term" value="P:regulation of synaptic plasticity"/>
    <property type="evidence" value="ECO:0000315"/>
    <property type="project" value="UniProtKB"/>
</dbReference>
<dbReference type="GO" id="GO:0050863">
    <property type="term" value="P:regulation of T cell activation"/>
    <property type="evidence" value="ECO:0000315"/>
    <property type="project" value="UniProtKB"/>
</dbReference>
<dbReference type="GO" id="GO:0006357">
    <property type="term" value="P:regulation of transcription by RNA polymerase II"/>
    <property type="evidence" value="ECO:0000266"/>
    <property type="project" value="ComplexPortal"/>
</dbReference>
<dbReference type="GO" id="GO:0031667">
    <property type="term" value="P:response to nutrient levels"/>
    <property type="evidence" value="ECO:0007669"/>
    <property type="project" value="Ensembl"/>
</dbReference>
<dbReference type="GO" id="GO:0001756">
    <property type="term" value="P:somitogenesis"/>
    <property type="evidence" value="ECO:0000315"/>
    <property type="project" value="MGI"/>
</dbReference>
<dbReference type="GO" id="GO:0021537">
    <property type="term" value="P:telencephalon development"/>
    <property type="evidence" value="ECO:0000315"/>
    <property type="project" value="MGI"/>
</dbReference>
<dbReference type="CDD" id="cd05509">
    <property type="entry name" value="Bromo_gcn5_like"/>
    <property type="match status" value="1"/>
</dbReference>
<dbReference type="CDD" id="cd04301">
    <property type="entry name" value="NAT_SF"/>
    <property type="match status" value="1"/>
</dbReference>
<dbReference type="FunFam" id="3.40.630.30:FF:000004">
    <property type="entry name" value="Histone acetyltransferase KAT2A"/>
    <property type="match status" value="1"/>
</dbReference>
<dbReference type="FunFam" id="1.20.920.10:FF:000014">
    <property type="entry name" value="Histone acetyltransferase KAT2B"/>
    <property type="match status" value="1"/>
</dbReference>
<dbReference type="Gene3D" id="3.40.630.30">
    <property type="match status" value="1"/>
</dbReference>
<dbReference type="Gene3D" id="1.20.920.10">
    <property type="entry name" value="Bromodomain-like"/>
    <property type="match status" value="1"/>
</dbReference>
<dbReference type="InterPro" id="IPR016181">
    <property type="entry name" value="Acyl_CoA_acyltransferase"/>
</dbReference>
<dbReference type="InterPro" id="IPR001487">
    <property type="entry name" value="Bromodomain"/>
</dbReference>
<dbReference type="InterPro" id="IPR036427">
    <property type="entry name" value="Bromodomain-like_sf"/>
</dbReference>
<dbReference type="InterPro" id="IPR018359">
    <property type="entry name" value="Bromodomain_CS"/>
</dbReference>
<dbReference type="InterPro" id="IPR037800">
    <property type="entry name" value="GCN5"/>
</dbReference>
<dbReference type="InterPro" id="IPR016376">
    <property type="entry name" value="GCN5/PCAF"/>
</dbReference>
<dbReference type="InterPro" id="IPR000182">
    <property type="entry name" value="GNAT_dom"/>
</dbReference>
<dbReference type="InterPro" id="IPR009464">
    <property type="entry name" value="PCAF_N"/>
</dbReference>
<dbReference type="PANTHER" id="PTHR45750">
    <property type="entry name" value="GH11602P"/>
    <property type="match status" value="1"/>
</dbReference>
<dbReference type="PANTHER" id="PTHR45750:SF1">
    <property type="entry name" value="HISTONE ACETYLTRANSFERASE KAT2A"/>
    <property type="match status" value="1"/>
</dbReference>
<dbReference type="Pfam" id="PF00583">
    <property type="entry name" value="Acetyltransf_1"/>
    <property type="match status" value="1"/>
</dbReference>
<dbReference type="Pfam" id="PF00439">
    <property type="entry name" value="Bromodomain"/>
    <property type="match status" value="1"/>
</dbReference>
<dbReference type="Pfam" id="PF06466">
    <property type="entry name" value="PCAF_N"/>
    <property type="match status" value="1"/>
</dbReference>
<dbReference type="PIRSF" id="PIRSF003048">
    <property type="entry name" value="Histone_acetylase_PCAF"/>
    <property type="match status" value="1"/>
</dbReference>
<dbReference type="PRINTS" id="PR00503">
    <property type="entry name" value="BROMODOMAIN"/>
</dbReference>
<dbReference type="SMART" id="SM00297">
    <property type="entry name" value="BROMO"/>
    <property type="match status" value="1"/>
</dbReference>
<dbReference type="SUPFAM" id="SSF55729">
    <property type="entry name" value="Acyl-CoA N-acyltransferases (Nat)"/>
    <property type="match status" value="1"/>
</dbReference>
<dbReference type="SUPFAM" id="SSF47370">
    <property type="entry name" value="Bromodomain"/>
    <property type="match status" value="1"/>
</dbReference>
<dbReference type="PROSITE" id="PS00633">
    <property type="entry name" value="BROMODOMAIN_1"/>
    <property type="match status" value="1"/>
</dbReference>
<dbReference type="PROSITE" id="PS50014">
    <property type="entry name" value="BROMODOMAIN_2"/>
    <property type="match status" value="1"/>
</dbReference>
<dbReference type="PROSITE" id="PS51186">
    <property type="entry name" value="GNAT"/>
    <property type="match status" value="1"/>
</dbReference>
<name>KAT2A_MOUSE</name>
<evidence type="ECO:0000250" key="1">
    <source>
        <dbReference type="UniProtKB" id="Q92830"/>
    </source>
</evidence>
<evidence type="ECO:0000255" key="2">
    <source>
        <dbReference type="PROSITE-ProRule" id="PRU00035"/>
    </source>
</evidence>
<evidence type="ECO:0000255" key="3">
    <source>
        <dbReference type="PROSITE-ProRule" id="PRU00532"/>
    </source>
</evidence>
<evidence type="ECO:0000256" key="4">
    <source>
        <dbReference type="SAM" id="MobiDB-lite"/>
    </source>
</evidence>
<evidence type="ECO:0000269" key="5">
    <source>
    </source>
</evidence>
<evidence type="ECO:0000269" key="6">
    <source>
    </source>
</evidence>
<evidence type="ECO:0000269" key="7">
    <source>
    </source>
</evidence>
<evidence type="ECO:0000269" key="8">
    <source>
    </source>
</evidence>
<evidence type="ECO:0000269" key="9">
    <source>
    </source>
</evidence>
<evidence type="ECO:0000269" key="10">
    <source>
    </source>
</evidence>
<evidence type="ECO:0000269" key="11">
    <source>
    </source>
</evidence>
<evidence type="ECO:0000269" key="12">
    <source>
    </source>
</evidence>
<evidence type="ECO:0000303" key="13">
    <source>
    </source>
</evidence>
<evidence type="ECO:0000303" key="14">
    <source>
    </source>
</evidence>
<evidence type="ECO:0000305" key="15"/>
<evidence type="ECO:0000305" key="16">
    <source>
    </source>
</evidence>
<evidence type="ECO:0000312" key="17">
    <source>
        <dbReference type="MGI" id="MGI:1343101"/>
    </source>
</evidence>
<evidence type="ECO:0007829" key="18">
    <source>
        <dbReference type="PDB" id="7BY1"/>
    </source>
</evidence>
<reference key="1">
    <citation type="journal article" date="1998" name="Mol. Cell. Biol.">
        <title>Mammalian GCN5 and P/CAF acetyltransferases have homologous amino-terminal domains important for recognition of nucleosomal substrates.</title>
        <authorList>
            <person name="Xu W."/>
            <person name="Edmondson D.G."/>
            <person name="Roth S.Y."/>
        </authorList>
    </citation>
    <scope>NUCLEOTIDE SEQUENCE [MRNA]</scope>
</reference>
<reference key="2">
    <citation type="journal article" date="2005" name="Science">
        <title>The transcriptional landscape of the mammalian genome.</title>
        <authorList>
            <person name="Carninci P."/>
            <person name="Kasukawa T."/>
            <person name="Katayama S."/>
            <person name="Gough J."/>
            <person name="Frith M.C."/>
            <person name="Maeda N."/>
            <person name="Oyama R."/>
            <person name="Ravasi T."/>
            <person name="Lenhard B."/>
            <person name="Wells C."/>
            <person name="Kodzius R."/>
            <person name="Shimokawa K."/>
            <person name="Bajic V.B."/>
            <person name="Brenner S.E."/>
            <person name="Batalov S."/>
            <person name="Forrest A.R."/>
            <person name="Zavolan M."/>
            <person name="Davis M.J."/>
            <person name="Wilming L.G."/>
            <person name="Aidinis V."/>
            <person name="Allen J.E."/>
            <person name="Ambesi-Impiombato A."/>
            <person name="Apweiler R."/>
            <person name="Aturaliya R.N."/>
            <person name="Bailey T.L."/>
            <person name="Bansal M."/>
            <person name="Baxter L."/>
            <person name="Beisel K.W."/>
            <person name="Bersano T."/>
            <person name="Bono H."/>
            <person name="Chalk A.M."/>
            <person name="Chiu K.P."/>
            <person name="Choudhary V."/>
            <person name="Christoffels A."/>
            <person name="Clutterbuck D.R."/>
            <person name="Crowe M.L."/>
            <person name="Dalla E."/>
            <person name="Dalrymple B.P."/>
            <person name="de Bono B."/>
            <person name="Della Gatta G."/>
            <person name="di Bernardo D."/>
            <person name="Down T."/>
            <person name="Engstrom P."/>
            <person name="Fagiolini M."/>
            <person name="Faulkner G."/>
            <person name="Fletcher C.F."/>
            <person name="Fukushima T."/>
            <person name="Furuno M."/>
            <person name="Futaki S."/>
            <person name="Gariboldi M."/>
            <person name="Georgii-Hemming P."/>
            <person name="Gingeras T.R."/>
            <person name="Gojobori T."/>
            <person name="Green R.E."/>
            <person name="Gustincich S."/>
            <person name="Harbers M."/>
            <person name="Hayashi Y."/>
            <person name="Hensch T.K."/>
            <person name="Hirokawa N."/>
            <person name="Hill D."/>
            <person name="Huminiecki L."/>
            <person name="Iacono M."/>
            <person name="Ikeo K."/>
            <person name="Iwama A."/>
            <person name="Ishikawa T."/>
            <person name="Jakt M."/>
            <person name="Kanapin A."/>
            <person name="Katoh M."/>
            <person name="Kawasawa Y."/>
            <person name="Kelso J."/>
            <person name="Kitamura H."/>
            <person name="Kitano H."/>
            <person name="Kollias G."/>
            <person name="Krishnan S.P."/>
            <person name="Kruger A."/>
            <person name="Kummerfeld S.K."/>
            <person name="Kurochkin I.V."/>
            <person name="Lareau L.F."/>
            <person name="Lazarevic D."/>
            <person name="Lipovich L."/>
            <person name="Liu J."/>
            <person name="Liuni S."/>
            <person name="McWilliam S."/>
            <person name="Madan Babu M."/>
            <person name="Madera M."/>
            <person name="Marchionni L."/>
            <person name="Matsuda H."/>
            <person name="Matsuzawa S."/>
            <person name="Miki H."/>
            <person name="Mignone F."/>
            <person name="Miyake S."/>
            <person name="Morris K."/>
            <person name="Mottagui-Tabar S."/>
            <person name="Mulder N."/>
            <person name="Nakano N."/>
            <person name="Nakauchi H."/>
            <person name="Ng P."/>
            <person name="Nilsson R."/>
            <person name="Nishiguchi S."/>
            <person name="Nishikawa S."/>
            <person name="Nori F."/>
            <person name="Ohara O."/>
            <person name="Okazaki Y."/>
            <person name="Orlando V."/>
            <person name="Pang K.C."/>
            <person name="Pavan W.J."/>
            <person name="Pavesi G."/>
            <person name="Pesole G."/>
            <person name="Petrovsky N."/>
            <person name="Piazza S."/>
            <person name="Reed J."/>
            <person name="Reid J.F."/>
            <person name="Ring B.Z."/>
            <person name="Ringwald M."/>
            <person name="Rost B."/>
            <person name="Ruan Y."/>
            <person name="Salzberg S.L."/>
            <person name="Sandelin A."/>
            <person name="Schneider C."/>
            <person name="Schoenbach C."/>
            <person name="Sekiguchi K."/>
            <person name="Semple C.A."/>
            <person name="Seno S."/>
            <person name="Sessa L."/>
            <person name="Sheng Y."/>
            <person name="Shibata Y."/>
            <person name="Shimada H."/>
            <person name="Shimada K."/>
            <person name="Silva D."/>
            <person name="Sinclair B."/>
            <person name="Sperling S."/>
            <person name="Stupka E."/>
            <person name="Sugiura K."/>
            <person name="Sultana R."/>
            <person name="Takenaka Y."/>
            <person name="Taki K."/>
            <person name="Tammoja K."/>
            <person name="Tan S.L."/>
            <person name="Tang S."/>
            <person name="Taylor M.S."/>
            <person name="Tegner J."/>
            <person name="Teichmann S.A."/>
            <person name="Ueda H.R."/>
            <person name="van Nimwegen E."/>
            <person name="Verardo R."/>
            <person name="Wei C.L."/>
            <person name="Yagi K."/>
            <person name="Yamanishi H."/>
            <person name="Zabarovsky E."/>
            <person name="Zhu S."/>
            <person name="Zimmer A."/>
            <person name="Hide W."/>
            <person name="Bult C."/>
            <person name="Grimmond S.M."/>
            <person name="Teasdale R.D."/>
            <person name="Liu E.T."/>
            <person name="Brusic V."/>
            <person name="Quackenbush J."/>
            <person name="Wahlestedt C."/>
            <person name="Mattick J.S."/>
            <person name="Hume D.A."/>
            <person name="Kai C."/>
            <person name="Sasaki D."/>
            <person name="Tomaru Y."/>
            <person name="Fukuda S."/>
            <person name="Kanamori-Katayama M."/>
            <person name="Suzuki M."/>
            <person name="Aoki J."/>
            <person name="Arakawa T."/>
            <person name="Iida J."/>
            <person name="Imamura K."/>
            <person name="Itoh M."/>
            <person name="Kato T."/>
            <person name="Kawaji H."/>
            <person name="Kawagashira N."/>
            <person name="Kawashima T."/>
            <person name="Kojima M."/>
            <person name="Kondo S."/>
            <person name="Konno H."/>
            <person name="Nakano K."/>
            <person name="Ninomiya N."/>
            <person name="Nishio T."/>
            <person name="Okada M."/>
            <person name="Plessy C."/>
            <person name="Shibata K."/>
            <person name="Shiraki T."/>
            <person name="Suzuki S."/>
            <person name="Tagami M."/>
            <person name="Waki K."/>
            <person name="Watahiki A."/>
            <person name="Okamura-Oho Y."/>
            <person name="Suzuki H."/>
            <person name="Kawai J."/>
            <person name="Hayashizaki Y."/>
        </authorList>
    </citation>
    <scope>NUCLEOTIDE SEQUENCE [LARGE SCALE MRNA]</scope>
    <source>
        <strain>C57BL/6J</strain>
        <tissue>Inner ear</tissue>
    </source>
</reference>
<reference key="3">
    <citation type="journal article" date="2009" name="PLoS Biol.">
        <title>Lineage-specific biology revealed by a finished genome assembly of the mouse.</title>
        <authorList>
            <person name="Church D.M."/>
            <person name="Goodstadt L."/>
            <person name="Hillier L.W."/>
            <person name="Zody M.C."/>
            <person name="Goldstein S."/>
            <person name="She X."/>
            <person name="Bult C.J."/>
            <person name="Agarwala R."/>
            <person name="Cherry J.L."/>
            <person name="DiCuccio M."/>
            <person name="Hlavina W."/>
            <person name="Kapustin Y."/>
            <person name="Meric P."/>
            <person name="Maglott D."/>
            <person name="Birtle Z."/>
            <person name="Marques A.C."/>
            <person name="Graves T."/>
            <person name="Zhou S."/>
            <person name="Teague B."/>
            <person name="Potamousis K."/>
            <person name="Churas C."/>
            <person name="Place M."/>
            <person name="Herschleb J."/>
            <person name="Runnheim R."/>
            <person name="Forrest D."/>
            <person name="Amos-Landgraf J."/>
            <person name="Schwartz D.C."/>
            <person name="Cheng Z."/>
            <person name="Lindblad-Toh K."/>
            <person name="Eichler E.E."/>
            <person name="Ponting C.P."/>
        </authorList>
    </citation>
    <scope>NUCLEOTIDE SEQUENCE [LARGE SCALE GENOMIC DNA]</scope>
    <source>
        <strain>C57BL/6J</strain>
    </source>
</reference>
<reference key="4">
    <citation type="submission" date="2005-09" db="EMBL/GenBank/DDBJ databases">
        <authorList>
            <person name="Mural R.J."/>
            <person name="Adams M.D."/>
            <person name="Myers E.W."/>
            <person name="Smith H.O."/>
            <person name="Venter J.C."/>
        </authorList>
    </citation>
    <scope>NUCLEOTIDE SEQUENCE [LARGE SCALE GENOMIC DNA]</scope>
</reference>
<reference key="5">
    <citation type="journal article" date="2000" name="Nat. Genet.">
        <title>Loss of Gcn5l2 leads to increased apoptosis and mesodermal defects during mouse development.</title>
        <authorList>
            <person name="Xu W."/>
            <person name="Edmondson D.G."/>
            <person name="Evrard Y.A."/>
            <person name="Wakamiya M."/>
            <person name="Behringer R.R."/>
            <person name="Roth S.Y."/>
        </authorList>
    </citation>
    <scope>DEVELOPMENTAL STAGE</scope>
    <scope>DISRUPTION PHENOTYPE</scope>
</reference>
<reference key="6">
    <citation type="journal article" date="2007" name="Proc. Natl. Acad. Sci. U.S.A.">
        <title>Glucocorticoid-stimulated preadipocyte differentiation is mediated through acetylation of C/EBPbeta by GCN5.</title>
        <authorList>
            <person name="Wiper-Bergeron N."/>
            <person name="Salem H.A."/>
            <person name="Tomlinson J.J."/>
            <person name="Wu D."/>
            <person name="Hache R.J."/>
        </authorList>
    </citation>
    <scope>FUNCTION</scope>
    <scope>INTERACTION WITH CEBPB</scope>
</reference>
<reference key="7">
    <citation type="journal article" date="2012" name="J. Clin. Invest.">
        <title>A metabolic prosurvival role for PML in breast cancer.</title>
        <authorList>
            <person name="Carracedo A."/>
            <person name="Weiss D."/>
            <person name="Leliaert A.K."/>
            <person name="Bhasin M."/>
            <person name="de Boer V.C."/>
            <person name="Laurent G."/>
            <person name="Adams A.C."/>
            <person name="Sundvall M."/>
            <person name="Song S.J."/>
            <person name="Ito K."/>
            <person name="Finley L.S."/>
            <person name="Egia A."/>
            <person name="Libermann T."/>
            <person name="Gerhart-Hines Z."/>
            <person name="Puigserver P."/>
            <person name="Haigis M.C."/>
            <person name="Maratos-Flier E."/>
            <person name="Richardson A.L."/>
            <person name="Schafer Z.T."/>
            <person name="Pandolfi P.P."/>
        </authorList>
    </citation>
    <scope>INTERACTION WITH PML</scope>
</reference>
<reference key="8">
    <citation type="journal article" date="2014" name="EMBO J.">
        <title>K-Lysine acetyltransferase 2a regulates a hippocampal gene expression network linked to memory formation.</title>
        <authorList>
            <person name="Stilling R.M."/>
            <person name="Roenicke R."/>
            <person name="Benito E."/>
            <person name="Urbanke H."/>
            <person name="Capece V."/>
            <person name="Burkhardt S."/>
            <person name="Bahari-Javan S."/>
            <person name="Barth J."/>
            <person name="Sananbenesi F."/>
            <person name="Schuetz A.L."/>
            <person name="Dyczkowski J."/>
            <person name="Martinez-Hernandez A."/>
            <person name="Kerimoglu C."/>
            <person name="Dent S.Y."/>
            <person name="Bonn S."/>
            <person name="Reymann K.G."/>
            <person name="Fischer A."/>
        </authorList>
    </citation>
    <scope>FUNCTION</scope>
    <scope>DISRUPTION PHENOTYPE</scope>
    <scope>TISSUE SPECIFICITY</scope>
    <scope>INTERACTION WITH RELA</scope>
</reference>
<reference key="9">
    <citation type="journal article" date="2017" name="J. Immunol.">
        <title>The histone acetyltransferase Gcn5 positively regulates T cell activation.</title>
        <authorList>
            <person name="Gao B."/>
            <person name="Kong Q."/>
            <person name="Zhang Y."/>
            <person name="Yun C."/>
            <person name="Dent S.Y.R."/>
            <person name="Song J."/>
            <person name="Zhang D.D."/>
            <person name="Wang Y."/>
            <person name="Li X."/>
            <person name="Fang D."/>
        </authorList>
    </citation>
    <scope>FUNCTION</scope>
    <scope>CATALYTIC ACTIVITY</scope>
    <scope>SUBCELLULAR LOCATION</scope>
    <scope>DISRUPTION PHENOTYPE</scope>
    <scope>INTERACTION WITH NFATC2</scope>
</reference>
<reference key="10">
    <citation type="journal article" date="2018" name="J. Dev. Biol.">
        <title>Kat2a and Kat2b acetyltransferase activity regulates craniofacial cartilage and bone differentiation in zebrafish and mice.</title>
        <authorList>
            <person name="Sen R."/>
            <person name="Pezoa S.A."/>
            <person name="Carpio Shull L."/>
            <person name="Hernandez-Lagunas L."/>
            <person name="Niswander L.A."/>
            <person name="Artinger K.B."/>
        </authorList>
    </citation>
    <scope>FUNCTION</scope>
</reference>
<reference key="11">
    <citation type="journal article" date="2018" name="Stem Cells">
        <title>Histone acetyltransferase KAT2A stabilizes pluripotency with control of transcriptional heterogeneity.</title>
        <authorList>
            <person name="Moris N."/>
            <person name="Edri S."/>
            <person name="Seyres D."/>
            <person name="Kulkarni R."/>
            <person name="Domingues A.F."/>
            <person name="Balayo T."/>
            <person name="Frontini M."/>
            <person name="Pina C."/>
        </authorList>
    </citation>
    <scope>FUNCTION</scope>
</reference>
<reference key="12">
    <citation type="journal article" date="2022" name="Exp. Biol. Med. (Maywood)">
        <title>The effects of beta-catenin on cardiomyogenesis via Islet-1 and MLIP ubiquitination.</title>
        <authorList>
            <person name="Yan L."/>
            <person name="Xie M."/>
            <person name="Tan B."/>
            <person name="Xu H."/>
            <person name="Yi Q."/>
            <person name="Ye L."/>
            <person name="Zhang X."/>
            <person name="Zhang Y."/>
            <person name="Tian J."/>
            <person name="Zhu J."/>
        </authorList>
    </citation>
    <scope>INTERACTION WITH ISL1</scope>
</reference>
<proteinExistence type="evidence at protein level"/>
<accession>Q9JHD2</accession>
<accession>Q3TZ59</accession>
<comment type="function">
    <text evidence="1 6 8 9 10 11">Protein lysine acyltransferase that can act as a acetyltransferase, glutaryltransferase, succinyltransferase or malonyltransferase, depending on the context (PubMed:28424240). Acts as a histone lysine succinyltransferase: catalyzes succinylation of histone H3 on 'Lys-79' (H3K79succ), with a maximum frequency around the transcription start sites of genes (By similarity). Succinylation of histones gives a specific tag for epigenetic transcription activation (By similarity). Association with the 2-oxoglutarate dehydrogenase complex, which provides succinyl-CoA, is required for histone succinylation (By similarity). In different complexes, functions either as an acetyltransferase (HAT) or as a succinyltransferase: in the SAGA and ATAC complexes, acts as a histone acetyltransferase (By similarity). Has significant histone acetyltransferase activity with core histones, but not with nucleosome core particles (By similarity). Has a a strong preference for acetylation of H3 at 'Lys-9' (H3K9ac) (By similarity). Acetylation of histones gives a specific tag for epigenetic transcription activation (PubMed:28424240). Recruited by the XPC complex at promoters, where it specifically mediates acetylation of histone variant H2A.Z.1/H2A.Z, thereby promoting expression of target genes (By similarity). Involved in long-term memory consolidation and synaptic plasticity: acts by promoting expression of a hippocampal gene expression network linked to neuroactive receptor signaling (PubMed:25024434). Acts as a positive regulator of T-cell activation: upon TCR stimulation, recruited to the IL2 promoter following interaction with NFATC2 and catalyzes acetylation of histone H3 at 'Lys-9' (H3K9ac), leading to promote IL2 expression (PubMed:28424240). Required for growth and differentiation of craniofacial cartilage and bone by regulating acetylation of histone H3 at 'Lys-9' (H3K9ac) (PubMed:30424580). Regulates embryonic stem cell (ESC) pluripotency and differentiation (PubMed:30270482). Also acetylates non-histone proteins, such as CEBPB, MRE11, PPARGC1A, PLK4 and TBX5 (PubMed:17301242). Involved in heart and limb development by mediating acetylation of TBX5, acetylation regulating nucleocytoplasmic shuttling of TBX5 (By similarity). Acts as a negative regulator of centrosome amplification by mediating acetylation of PLK4 (By similarity). Acts as a negative regulator of gluconeogenesis by mediating acetylation and subsequent inactivation of PPARGC1A (By similarity). Also acts as a histone glutaryltransferase: catalyzes glutarylation of histone H4 on 'Lys-91' (H4K91glu), a mark that destabilizes nucleosomes by promoting dissociation of the H2A-H2B dimers from nucleosomes (By similarity).</text>
</comment>
<comment type="catalytic activity">
    <reaction evidence="16">
        <text>L-lysyl-[histone] + acetyl-CoA = N(6)-acetyl-L-lysyl-[histone] + CoA + H(+)</text>
        <dbReference type="Rhea" id="RHEA:21992"/>
        <dbReference type="Rhea" id="RHEA-COMP:9845"/>
        <dbReference type="Rhea" id="RHEA-COMP:11338"/>
        <dbReference type="ChEBI" id="CHEBI:15378"/>
        <dbReference type="ChEBI" id="CHEBI:29969"/>
        <dbReference type="ChEBI" id="CHEBI:57287"/>
        <dbReference type="ChEBI" id="CHEBI:57288"/>
        <dbReference type="ChEBI" id="CHEBI:61930"/>
        <dbReference type="EC" id="2.3.1.48"/>
    </reaction>
    <physiologicalReaction direction="left-to-right" evidence="16">
        <dbReference type="Rhea" id="RHEA:21993"/>
    </physiologicalReaction>
</comment>
<comment type="catalytic activity">
    <reaction evidence="16">
        <text>L-lysyl-[protein] + acetyl-CoA = N(6)-acetyl-L-lysyl-[protein] + CoA + H(+)</text>
        <dbReference type="Rhea" id="RHEA:45948"/>
        <dbReference type="Rhea" id="RHEA-COMP:9752"/>
        <dbReference type="Rhea" id="RHEA-COMP:10731"/>
        <dbReference type="ChEBI" id="CHEBI:15378"/>
        <dbReference type="ChEBI" id="CHEBI:29969"/>
        <dbReference type="ChEBI" id="CHEBI:57287"/>
        <dbReference type="ChEBI" id="CHEBI:57288"/>
        <dbReference type="ChEBI" id="CHEBI:61930"/>
    </reaction>
    <physiologicalReaction direction="left-to-right" evidence="16">
        <dbReference type="Rhea" id="RHEA:45949"/>
    </physiologicalReaction>
</comment>
<comment type="catalytic activity">
    <reaction evidence="1">
        <text>succinyl-CoA + L-lysyl-[protein] = N(6)-succinyl-L-lysyl-[protein] + CoA + H(+)</text>
        <dbReference type="Rhea" id="RHEA:16261"/>
        <dbReference type="Rhea" id="RHEA-COMP:9752"/>
        <dbReference type="Rhea" id="RHEA-COMP:11877"/>
        <dbReference type="ChEBI" id="CHEBI:15378"/>
        <dbReference type="ChEBI" id="CHEBI:29969"/>
        <dbReference type="ChEBI" id="CHEBI:57287"/>
        <dbReference type="ChEBI" id="CHEBI:57292"/>
        <dbReference type="ChEBI" id="CHEBI:87830"/>
    </reaction>
</comment>
<comment type="catalytic activity">
    <reaction evidence="1">
        <text>glutaryl-CoA + L-lysyl-[protein] = N(6)-glutaryl-L-lysyl-[protein] + CoA + H(+)</text>
        <dbReference type="Rhea" id="RHEA:18009"/>
        <dbReference type="Rhea" id="RHEA-COMP:9752"/>
        <dbReference type="Rhea" id="RHEA-COMP:11875"/>
        <dbReference type="ChEBI" id="CHEBI:15378"/>
        <dbReference type="ChEBI" id="CHEBI:29969"/>
        <dbReference type="ChEBI" id="CHEBI:57287"/>
        <dbReference type="ChEBI" id="CHEBI:57378"/>
        <dbReference type="ChEBI" id="CHEBI:87828"/>
    </reaction>
    <physiologicalReaction direction="left-to-right" evidence="1">
        <dbReference type="Rhea" id="RHEA:18010"/>
    </physiologicalReaction>
</comment>
<comment type="subunit">
    <text evidence="1 6 7 8 9 12">Interacts with EP300, CREBBP and ADA2 (By similarity). Component of the TFTC-HAT complex, at least composed of TAF5L, TAF6L, TAF3, TADA3L, SUPT3H/SPT3, TAF2/TAFII150, TAF4/TAFII135, TAF5/TAFII100, KAT2A/GCN5L2, TAF10 and TRRAP (By similarity). Component of the STAGA transcription coactivator-HAT complex, at least composed of SUPT3H, KAT2A, SUPT7L, TAF5L, TAF6L, TADA3L, TAD1L, TAF10, TAF12, TRRAP and TAF9 (By similarity). The STAGA core complex is associated with a subcomplex required for histone deubiquitination composed of ATXN7L3, ENY2 and USP22 (By similarity). Component of the ADA2A-containing complex (ATAC), composed of KAT14, KAT2A, TADA2L, TADA3L, ZZ3, MBIP, WDR5, YEATS2, CCDC101 and DR1 (By similarity). In the complex, it probably interacts directly with KAT14, MBIP and WDR5 (By similarity). Interacts with PML (PubMed:22886304). Interacts with CEBPB (PubMed:17301242). Interacts with TACC1, TACC2 and TACC3 (By similarity). Interacts with RELA (PubMed:25024434). Interacts with NFATC2 (PubMed:28424240). Interacts with TBX5 (By similarity). Interacts with PLK4 (By similarity). Associates with the 2-oxoglutarate dehydrogenase complex (By similarity). Interacts with XPC; leading to KAT2A recruitment to promoters and subsequent acetylation of histones (By similarity). Interacts with ERCC3/XPB; leading to KAT2A recruitment to promoters and subsequent acetylation of histones (By similarity). Interacts with ISL1. Interactions of ISL1 with MLIP1 or KAT2A may be mutually exclusive (PubMed:36112854).</text>
</comment>
<comment type="interaction">
    <interactant intactId="EBI-2943116">
        <id>Q9JHD2</id>
    </interactant>
    <interactant intactId="EBI-1029979">
        <id>P28033</id>
        <label>Cebpb</label>
    </interactant>
    <organismsDiffer>false</organismsDiffer>
    <experiments>5</experiments>
</comment>
<comment type="interaction">
    <interactant intactId="EBI-2943116">
        <id>Q9JHD2</id>
    </interactant>
    <interactant intactId="EBI-2942477">
        <id>Q80YV3</id>
        <label>Trrap</label>
    </interactant>
    <organismsDiffer>false</organismsDiffer>
    <experiments>4</experiments>
</comment>
<comment type="subcellular location">
    <subcellularLocation>
        <location evidence="1">Nucleus</location>
    </subcellularLocation>
    <subcellularLocation>
        <location evidence="9">Chromosome</location>
    </subcellularLocation>
    <subcellularLocation>
        <location evidence="1">Cytoplasm</location>
        <location evidence="1">Cytoskeleton</location>
        <location evidence="1">Microtubule organizing center</location>
        <location evidence="1">Centrosome</location>
    </subcellularLocation>
    <text evidence="1">Mainly localizes to the nucleus. Localizes to sites of DNA damage. Also localizes to centrosomes in late G1 and around the G1/S transition, coinciding with the onset of centriole formation.</text>
</comment>
<comment type="tissue specificity">
    <text evidence="8">In brain, highly expressed in the hippocampal CA1 region (at protein level) (PubMed:25024434). Also expressed in the hippocampal subregions CA3 and the dentate gyrus as well as in the cortex and prefrontal cortex (PubMed:25024434). Expressed at low level in the cerebellum (PubMed:25024434).</text>
</comment>
<comment type="developmental stage">
    <text evidence="5">Expressed uniformly throughout the embryo from 7.5 to 9.0 dpc, except in the distal allantois and developing heart. Gcn5l2 expression is down-regulated after 16.5 dpc, but is later up-regulated in specific adult tissues.</text>
</comment>
<comment type="domain">
    <text evidence="1">Loop3 is required for substrate specificity and adopts different structural conformations in succinyl-CoA-bound and acetyl-CoA-bound forms. Tyr-638 has an important role in the selective binding of succinyl-CoA over acetyl-CoA.</text>
</comment>
<comment type="PTM">
    <text evidence="1">Acetylated at Lys-542, inhibiting the protein acetyltransferase activity (By similarity). Deacetylation at Lys-542 by SIRT6 promotes phosphorylation at Ser-302 and Thr-728 and subsequent activation of the protein acetyltransferase activity, leading to acetylation and inactivation of PPARGC1A (By similarity).</text>
</comment>
<comment type="disruption phenotype">
    <text evidence="5 8 9">Lethality during embryogenesis: embryos develop normally to 7.5 days post coitum (dpc), but growth is severely retarded by 8.5 dpc and embryos fail to form dorsal mesoderm lineages, including chordamesoderm and paraxial mesoderm (PubMed:11017084). Differentiation of extra-embryonic and cardiac mesoderm is not affected (PubMed:11017084). Loss of the dorsal mesoderm lineages is due to an increased apoptosis (PubMed:11017084). Conditional knockout mice lacking Kat2a in the excitatory neurons of the adult forebrain display impaired hippocampus-dependent memory consolidation as well as impaired synaptic and nuclear plasticity (PubMed:25024434). Conditional knockout mice lacking Kat2a in T lymphocytes show defects in T-cell activation, T-cell proliferation, IL2 production and Th1/Th17 regulatory T-cell differentiation (PubMed:28424240). Th2 regulatory T-cell differentiation is not affected (PubMed:28424240).</text>
</comment>
<comment type="similarity">
    <text evidence="15">Belongs to the acetyltransferase family. GCN5 subfamily.</text>
</comment>
<sequence length="830" mass="93394">MAEPSQAPNPVPAAQPRPLHSPAPAPTSTPAPSPASASTPAPTPAPAPAPAAAPAGSTGSGGAGVGSGGDPARPGLSQQQRASQRKAQVRGLPRAKKLEKLGVFSACKANETCKCNGWKNPKPPTAPRMDLQQPAANLSELCRSCEHPLADHVSHLENVSEDEINRLLGMVVDVENLFMSVHKEEDTDTKQVYFYLFKLLRKCILQMTRPVVEGSLGSPPFEKPNIEQGVLNFVQYKFSHLAPRERQTMFELSKMFLLCLNYWKLETPAQFRQRSQSEDVATYKVNYTRWLCYCHVPQSCDSLPRYETTHVFGRSLLRSIFTVTRRQLLEKFRVEKDKLVPEKRTLILTHFPKFLSMLEEEIYGANSPIWESGFTMPPSEGTQLVPRPATVSATVVPSFSPSMGGGSNSSLSLDSAGTEPMPAGEKRKLPENLTLEDAKRLRVMGDIPMELVNEVMLTITDPAAMLGPETSLLSANAARDETARLEERRGIIEFHVIGNSLTPKANRRVLLWLVGLQNVFSHQLPRMPKEYIARLVFDPKHKTLALIKDGRVIGGICFRMFPTQGFTEIVFCAVTSNEQVKGYGTHLMNHLKEYHIKHSILYFLTYADEYAIGYFKKQGFSKDIKVPKSRYLGYIKDYEGATLMECELNPRIPYTELSHIIKKQKEIIKKLIERKQAQIRKVYPGLSCFKEGVRQIPVESVPGIRETGWKPLGKEKGKELKDPDQLYTTLKNLLAQIKSHPSAWPFMEPVKKSEAPDYYEVIRFPIDLKTMTERLRSRYYVTRKLFVADLQRVIANCREYNPPDSEYCRCASALEKFFYFKLKEGGLIDK</sequence>
<keyword id="KW-0002">3D-structure</keyword>
<keyword id="KW-0007">Acetylation</keyword>
<keyword id="KW-0012">Acyltransferase</keyword>
<keyword id="KW-0103">Bromodomain</keyword>
<keyword id="KW-0158">Chromosome</keyword>
<keyword id="KW-0963">Cytoplasm</keyword>
<keyword id="KW-0206">Cytoskeleton</keyword>
<keyword id="KW-1017">Isopeptide bond</keyword>
<keyword id="KW-0539">Nucleus</keyword>
<keyword id="KW-0597">Phosphoprotein</keyword>
<keyword id="KW-1185">Reference proteome</keyword>
<keyword id="KW-0804">Transcription</keyword>
<keyword id="KW-0805">Transcription regulation</keyword>
<keyword id="KW-0808">Transferase</keyword>
<keyword id="KW-0832">Ubl conjugation</keyword>